<evidence type="ECO:0000255" key="1">
    <source>
        <dbReference type="HAMAP-Rule" id="MF_01349"/>
    </source>
</evidence>
<gene>
    <name evidence="1" type="primary">panC/cmk</name>
    <name type="ordered locus">AM1_2620</name>
</gene>
<sequence>MDNVPIIRTVSGLRHFLRCFPGNLNTGASPSSTVIGQIGLVPTMGALHAGHLSLIQRARQENQCVIVSIFVNPLQFAAHEDLTEYPQTLNQDQALCQEQGVNTIFAPSTDTLLADAPLTQVIPPASLTEYLCGPHRPDHFTGVATIVLKLLNIVQPTRAYFGQKDAQQLAIIQRLVQDFNLDVTIVPCKLIRDATGLALSSRNQYLNAQEAQQATILHHSLQAARHTFQGGSCDRNSVLATVAQTLAKGPQVEVEYIDLVDPVTLQPLEQITTQGLVAIAARVGSARLIDNMLLDARLPILAIDGPAGAGKSTVTRRCAQAIGLQYLDTGAMYRAVAWLALDQQVEVSDPFAIADLVEDCQIELKPHADPQQQPQVWVNHQEVTQAIRTPDVTALVSAVAAQPPVREALVKQQQRLGRQGGLIAEGRDIGTNVFPDAGLKIFLTASIEERARRRQQDLKNQNLPPQTQSELEDLIASRDQQDSQREFAPLRKAYDAVEINTDGMTIEQVITRITTLYQERFPDRA</sequence>
<name>PANCY_ACAM1</name>
<proteinExistence type="inferred from homology"/>
<dbReference type="EC" id="6.3.2.1" evidence="1"/>
<dbReference type="EC" id="2.7.4.25" evidence="1"/>
<dbReference type="EMBL" id="CP000828">
    <property type="protein sequence ID" value="ABW27627.1"/>
    <property type="molecule type" value="Genomic_DNA"/>
</dbReference>
<dbReference type="RefSeq" id="WP_012163080.1">
    <property type="nucleotide sequence ID" value="NC_009925.1"/>
</dbReference>
<dbReference type="SMR" id="B0C6S1"/>
<dbReference type="STRING" id="329726.AM1_2620"/>
<dbReference type="KEGG" id="amr:AM1_2620"/>
<dbReference type="eggNOG" id="COG0283">
    <property type="taxonomic scope" value="Bacteria"/>
</dbReference>
<dbReference type="eggNOG" id="COG0414">
    <property type="taxonomic scope" value="Bacteria"/>
</dbReference>
<dbReference type="HOGENOM" id="CLU_037427_0_0_3"/>
<dbReference type="OrthoDB" id="9773087at2"/>
<dbReference type="UniPathway" id="UPA00028">
    <property type="reaction ID" value="UER00005"/>
</dbReference>
<dbReference type="Proteomes" id="UP000000268">
    <property type="component" value="Chromosome"/>
</dbReference>
<dbReference type="GO" id="GO:0005829">
    <property type="term" value="C:cytosol"/>
    <property type="evidence" value="ECO:0007669"/>
    <property type="project" value="TreeGrafter"/>
</dbReference>
<dbReference type="GO" id="GO:0005524">
    <property type="term" value="F:ATP binding"/>
    <property type="evidence" value="ECO:0007669"/>
    <property type="project" value="UniProtKB-UniRule"/>
</dbReference>
<dbReference type="GO" id="GO:0036430">
    <property type="term" value="F:CMP kinase activity"/>
    <property type="evidence" value="ECO:0007669"/>
    <property type="project" value="RHEA"/>
</dbReference>
<dbReference type="GO" id="GO:0036431">
    <property type="term" value="F:dCMP kinase activity"/>
    <property type="evidence" value="ECO:0007669"/>
    <property type="project" value="RHEA"/>
</dbReference>
<dbReference type="GO" id="GO:0004592">
    <property type="term" value="F:pantoate-beta-alanine ligase activity"/>
    <property type="evidence" value="ECO:0007669"/>
    <property type="project" value="UniProtKB-UniRule"/>
</dbReference>
<dbReference type="GO" id="GO:0015949">
    <property type="term" value="P:nucleobase-containing small molecule interconversion"/>
    <property type="evidence" value="ECO:0007669"/>
    <property type="project" value="TreeGrafter"/>
</dbReference>
<dbReference type="GO" id="GO:0015940">
    <property type="term" value="P:pantothenate biosynthetic process"/>
    <property type="evidence" value="ECO:0007669"/>
    <property type="project" value="UniProtKB-UniRule"/>
</dbReference>
<dbReference type="GO" id="GO:0006220">
    <property type="term" value="P:pyrimidine nucleotide metabolic process"/>
    <property type="evidence" value="ECO:0007669"/>
    <property type="project" value="UniProtKB-UniRule"/>
</dbReference>
<dbReference type="CDD" id="cd02020">
    <property type="entry name" value="CMPK"/>
    <property type="match status" value="1"/>
</dbReference>
<dbReference type="CDD" id="cd00560">
    <property type="entry name" value="PanC"/>
    <property type="match status" value="1"/>
</dbReference>
<dbReference type="Gene3D" id="3.40.50.620">
    <property type="entry name" value="HUPs"/>
    <property type="match status" value="1"/>
</dbReference>
<dbReference type="Gene3D" id="3.40.50.300">
    <property type="entry name" value="P-loop containing nucleotide triphosphate hydrolases"/>
    <property type="match status" value="1"/>
</dbReference>
<dbReference type="Gene3D" id="3.30.1300.10">
    <property type="entry name" value="Pantoate-beta-alanine ligase, C-terminal domain"/>
    <property type="match status" value="1"/>
</dbReference>
<dbReference type="HAMAP" id="MF_00238">
    <property type="entry name" value="Cytidyl_kinase_type1"/>
    <property type="match status" value="1"/>
</dbReference>
<dbReference type="HAMAP" id="MF_00158">
    <property type="entry name" value="PanC"/>
    <property type="match status" value="1"/>
</dbReference>
<dbReference type="HAMAP" id="MF_01349">
    <property type="entry name" value="PanCY"/>
    <property type="match status" value="1"/>
</dbReference>
<dbReference type="InterPro" id="IPR004821">
    <property type="entry name" value="Cyt_trans-like"/>
</dbReference>
<dbReference type="InterPro" id="IPR003136">
    <property type="entry name" value="Cytidylate_kin"/>
</dbReference>
<dbReference type="InterPro" id="IPR011994">
    <property type="entry name" value="Cytidylate_kinase_dom"/>
</dbReference>
<dbReference type="InterPro" id="IPR027417">
    <property type="entry name" value="P-loop_NTPase"/>
</dbReference>
<dbReference type="InterPro" id="IPR003721">
    <property type="entry name" value="Pantoate_ligase"/>
</dbReference>
<dbReference type="InterPro" id="IPR024894">
    <property type="entry name" value="Pantoate_ligase/cytidylate_kin"/>
</dbReference>
<dbReference type="InterPro" id="IPR042176">
    <property type="entry name" value="Pantoate_ligase_C"/>
</dbReference>
<dbReference type="InterPro" id="IPR014729">
    <property type="entry name" value="Rossmann-like_a/b/a_fold"/>
</dbReference>
<dbReference type="NCBIfam" id="TIGR00017">
    <property type="entry name" value="cmk"/>
    <property type="match status" value="1"/>
</dbReference>
<dbReference type="NCBIfam" id="TIGR00125">
    <property type="entry name" value="cyt_tran_rel"/>
    <property type="match status" value="1"/>
</dbReference>
<dbReference type="NCBIfam" id="TIGR00018">
    <property type="entry name" value="panC"/>
    <property type="match status" value="1"/>
</dbReference>
<dbReference type="NCBIfam" id="NF010004">
    <property type="entry name" value="PRK13477.1"/>
    <property type="match status" value="1"/>
</dbReference>
<dbReference type="PANTHER" id="PTHR21299:SF2">
    <property type="entry name" value="CYTIDYLATE KINASE"/>
    <property type="match status" value="1"/>
</dbReference>
<dbReference type="PANTHER" id="PTHR21299">
    <property type="entry name" value="CYTIDYLATE KINASE/PANTOATE-BETA-ALANINE LIGASE"/>
    <property type="match status" value="1"/>
</dbReference>
<dbReference type="Pfam" id="PF02224">
    <property type="entry name" value="Cytidylate_kin"/>
    <property type="match status" value="1"/>
</dbReference>
<dbReference type="Pfam" id="PF02569">
    <property type="entry name" value="Pantoate_ligase"/>
    <property type="match status" value="1"/>
</dbReference>
<dbReference type="SUPFAM" id="SSF52374">
    <property type="entry name" value="Nucleotidylyl transferase"/>
    <property type="match status" value="1"/>
</dbReference>
<dbReference type="SUPFAM" id="SSF52540">
    <property type="entry name" value="P-loop containing nucleoside triphosphate hydrolases"/>
    <property type="match status" value="1"/>
</dbReference>
<comment type="function">
    <text evidence="1">Catalyzes the condensation of pantoate with beta-alanine in an ATP-dependent reaction via a pantoyl-adenylate intermediate.</text>
</comment>
<comment type="function">
    <text evidence="1">Catalyzes the transfer of a phosphate group from ATP to either CMP or dCMP to form CDP or dCDP and ADP, respectively.</text>
</comment>
<comment type="catalytic activity">
    <reaction evidence="1">
        <text>(R)-pantoate + beta-alanine + ATP = (R)-pantothenate + AMP + diphosphate + H(+)</text>
        <dbReference type="Rhea" id="RHEA:10912"/>
        <dbReference type="ChEBI" id="CHEBI:15378"/>
        <dbReference type="ChEBI" id="CHEBI:15980"/>
        <dbReference type="ChEBI" id="CHEBI:29032"/>
        <dbReference type="ChEBI" id="CHEBI:30616"/>
        <dbReference type="ChEBI" id="CHEBI:33019"/>
        <dbReference type="ChEBI" id="CHEBI:57966"/>
        <dbReference type="ChEBI" id="CHEBI:456215"/>
        <dbReference type="EC" id="6.3.2.1"/>
    </reaction>
</comment>
<comment type="catalytic activity">
    <reaction evidence="1">
        <text>CMP + ATP = CDP + ADP</text>
        <dbReference type="Rhea" id="RHEA:11600"/>
        <dbReference type="ChEBI" id="CHEBI:30616"/>
        <dbReference type="ChEBI" id="CHEBI:58069"/>
        <dbReference type="ChEBI" id="CHEBI:60377"/>
        <dbReference type="ChEBI" id="CHEBI:456216"/>
        <dbReference type="EC" id="2.7.4.25"/>
    </reaction>
</comment>
<comment type="catalytic activity">
    <reaction evidence="1">
        <text>dCMP + ATP = dCDP + ADP</text>
        <dbReference type="Rhea" id="RHEA:25094"/>
        <dbReference type="ChEBI" id="CHEBI:30616"/>
        <dbReference type="ChEBI" id="CHEBI:57566"/>
        <dbReference type="ChEBI" id="CHEBI:58593"/>
        <dbReference type="ChEBI" id="CHEBI:456216"/>
        <dbReference type="EC" id="2.7.4.25"/>
    </reaction>
</comment>
<comment type="pathway">
    <text evidence="1">Cofactor biosynthesis; (R)-pantothenate biosynthesis; (R)-pantothenate from (R)-pantoate and beta-alanine: step 1/1.</text>
</comment>
<comment type="subcellular location">
    <subcellularLocation>
        <location evidence="1">Cytoplasm</location>
    </subcellularLocation>
</comment>
<comment type="similarity">
    <text evidence="1">In the N-terminal section; belongs to the pantothenate synthetase family.</text>
</comment>
<comment type="similarity">
    <text evidence="1">In the C-terminal section; belongs to the cytidylate kinase family. Type 1 subfamily.</text>
</comment>
<feature type="chain" id="PRO_0000333294" description="Bifunctional pantoate ligase/cytidylate kinase">
    <location>
        <begin position="1"/>
        <end position="525"/>
    </location>
</feature>
<feature type="region of interest" description="Pantoate--beta-alanine ligase">
    <location>
        <begin position="1"/>
        <end position="292"/>
    </location>
</feature>
<feature type="region of interest" description="Cytidylate kinase" evidence="1">
    <location>
        <begin position="293"/>
        <end position="525"/>
    </location>
</feature>
<feature type="active site" description="Proton donor" evidence="1">
    <location>
        <position position="51"/>
    </location>
</feature>
<feature type="binding site" evidence="1">
    <location>
        <begin position="44"/>
        <end position="51"/>
    </location>
    <ligand>
        <name>ATP</name>
        <dbReference type="ChEBI" id="CHEBI:30616"/>
    </ligand>
</feature>
<feature type="binding site" evidence="1">
    <location>
        <position position="75"/>
    </location>
    <ligand>
        <name>(R)-pantoate</name>
        <dbReference type="ChEBI" id="CHEBI:15980"/>
    </ligand>
</feature>
<feature type="binding site" evidence="1">
    <location>
        <position position="75"/>
    </location>
    <ligand>
        <name>beta-alanine</name>
        <dbReference type="ChEBI" id="CHEBI:57966"/>
    </ligand>
</feature>
<feature type="binding site" evidence="1">
    <location>
        <begin position="162"/>
        <end position="165"/>
    </location>
    <ligand>
        <name>ATP</name>
        <dbReference type="ChEBI" id="CHEBI:30616"/>
    </ligand>
</feature>
<feature type="binding site" evidence="1">
    <location>
        <position position="168"/>
    </location>
    <ligand>
        <name>(R)-pantoate</name>
        <dbReference type="ChEBI" id="CHEBI:15980"/>
    </ligand>
</feature>
<feature type="binding site" evidence="1">
    <location>
        <position position="191"/>
    </location>
    <ligand>
        <name>ATP</name>
        <dbReference type="ChEBI" id="CHEBI:30616"/>
    </ligand>
</feature>
<feature type="binding site" evidence="1">
    <location>
        <begin position="199"/>
        <end position="202"/>
    </location>
    <ligand>
        <name>ATP</name>
        <dbReference type="ChEBI" id="CHEBI:30616"/>
    </ligand>
</feature>
<accession>B0C6S1</accession>
<protein>
    <recommendedName>
        <fullName evidence="1">Bifunctional pantoate ligase/cytidylate kinase</fullName>
    </recommendedName>
    <domain>
        <recommendedName>
            <fullName evidence="1">Pantothenate synthetase</fullName>
            <shortName evidence="1">PS</shortName>
            <ecNumber evidence="1">6.3.2.1</ecNumber>
        </recommendedName>
        <alternativeName>
            <fullName evidence="1">Pantoate--beta-alanine ligase</fullName>
        </alternativeName>
        <alternativeName>
            <fullName evidence="1">Pantoate-activating enzyme</fullName>
        </alternativeName>
    </domain>
    <domain>
        <recommendedName>
            <fullName evidence="1">Cytidylate kinase</fullName>
            <shortName evidence="1">CK</shortName>
            <ecNumber evidence="1">2.7.4.25</ecNumber>
        </recommendedName>
        <alternativeName>
            <fullName evidence="1">Cytidine monophosphate kinase</fullName>
            <shortName evidence="1">CMP kinase</shortName>
        </alternativeName>
    </domain>
</protein>
<reference key="1">
    <citation type="journal article" date="2008" name="Proc. Natl. Acad. Sci. U.S.A.">
        <title>Niche adaptation and genome expansion in the chlorophyll d-producing cyanobacterium Acaryochloris marina.</title>
        <authorList>
            <person name="Swingley W.D."/>
            <person name="Chen M."/>
            <person name="Cheung P.C."/>
            <person name="Conrad A.L."/>
            <person name="Dejesa L.C."/>
            <person name="Hao J."/>
            <person name="Honchak B.M."/>
            <person name="Karbach L.E."/>
            <person name="Kurdoglu A."/>
            <person name="Lahiri S."/>
            <person name="Mastrian S.D."/>
            <person name="Miyashita H."/>
            <person name="Page L."/>
            <person name="Ramakrishna P."/>
            <person name="Satoh S."/>
            <person name="Sattley W.M."/>
            <person name="Shimada Y."/>
            <person name="Taylor H.L."/>
            <person name="Tomo T."/>
            <person name="Tsuchiya T."/>
            <person name="Wang Z.T."/>
            <person name="Raymond J."/>
            <person name="Mimuro M."/>
            <person name="Blankenship R.E."/>
            <person name="Touchman J.W."/>
        </authorList>
    </citation>
    <scope>NUCLEOTIDE SEQUENCE [LARGE SCALE GENOMIC DNA]</scope>
    <source>
        <strain>MBIC 11017</strain>
    </source>
</reference>
<keyword id="KW-0067">ATP-binding</keyword>
<keyword id="KW-0963">Cytoplasm</keyword>
<keyword id="KW-0418">Kinase</keyword>
<keyword id="KW-0436">Ligase</keyword>
<keyword id="KW-0511">Multifunctional enzyme</keyword>
<keyword id="KW-0547">Nucleotide-binding</keyword>
<keyword id="KW-0566">Pantothenate biosynthesis</keyword>
<keyword id="KW-1185">Reference proteome</keyword>
<keyword id="KW-0808">Transferase</keyword>
<organism>
    <name type="scientific">Acaryochloris marina (strain MBIC 11017)</name>
    <dbReference type="NCBI Taxonomy" id="329726"/>
    <lineage>
        <taxon>Bacteria</taxon>
        <taxon>Bacillati</taxon>
        <taxon>Cyanobacteriota</taxon>
        <taxon>Cyanophyceae</taxon>
        <taxon>Acaryochloridales</taxon>
        <taxon>Acaryochloridaceae</taxon>
        <taxon>Acaryochloris</taxon>
    </lineage>
</organism>